<gene>
    <name evidence="10" type="primary">flA</name>
</gene>
<proteinExistence type="evidence at protein level"/>
<name>FLA_STRCT</name>
<organism>
    <name type="scientific">Streptantibioticus cattleyicolor</name>
    <name type="common">Streptomyces cattleya</name>
    <dbReference type="NCBI Taxonomy" id="29303"/>
    <lineage>
        <taxon>Bacteria</taxon>
        <taxon>Bacillati</taxon>
        <taxon>Actinomycetota</taxon>
        <taxon>Actinomycetes</taxon>
        <taxon>Kitasatosporales</taxon>
        <taxon>Streptomycetaceae</taxon>
        <taxon>Streptantibioticus</taxon>
    </lineage>
</organism>
<protein>
    <recommendedName>
        <fullName evidence="11">Fluorinase</fullName>
        <ecNumber evidence="1 2 6">2.5.1.63</ecNumber>
    </recommendedName>
    <alternativeName>
        <fullName evidence="10">5'-fluoro-5'-deoxy-adenosine synthase</fullName>
        <shortName evidence="10">5'-FDAS</shortName>
    </alternativeName>
    <alternativeName>
        <fullName evidence="9">5'-fluorodeoxyadenosine synthase</fullName>
    </alternativeName>
</protein>
<reference key="1">
    <citation type="journal article" date="2004" name="Nature">
        <title>Crystal structure and mechanism of a bacterial fluorinating enzyme.</title>
        <authorList>
            <person name="Dong C."/>
            <person name="Huang F."/>
            <person name="Deng H."/>
            <person name="Schaffrath C."/>
            <person name="Spencer J.B."/>
            <person name="O'Hagan D."/>
            <person name="Naismith J.H."/>
        </authorList>
    </citation>
    <scope>NUCLEOTIDE SEQUENCE [GENOMIC DNA]</scope>
    <scope>X-RAY CRYSTALLOGRAPHY (1.8 ANGSTROMS) IN COMPLEX WITH SUBSTRATES</scope>
    <scope>FUNCTION</scope>
    <scope>CATALYTIC ACTIVITY</scope>
    <scope>BIOPHYSICOCHEMICAL PROPERTIES</scope>
    <scope>SUBUNIT</scope>
</reference>
<reference key="2">
    <citation type="journal article" date="2006" name="Chem. Biol.">
        <title>The gene cluster for fluorometabolite biosynthesis in Streptomyces cattleya: a thioesterase confers resistance to fluoroacetyl-coenzyme A.</title>
        <authorList>
            <person name="Huang F."/>
            <person name="Haydock S.F."/>
            <person name="Spiteller D."/>
            <person name="Mironenko T."/>
            <person name="Li T.-L."/>
            <person name="O'Hagan D."/>
            <person name="Leadlay P.F."/>
            <person name="Spencer J.B."/>
        </authorList>
    </citation>
    <scope>NUCLEOTIDE SEQUENCE [GENOMIC DNA]</scope>
    <scope>FUNCTION</scope>
    <scope>ACTIVITY REGULATION</scope>
</reference>
<reference key="3">
    <citation type="journal article" date="2003" name="FEBS Lett.">
        <title>Isolation and characterisation of 5'-fluorodeoxyadenosine synthase, a fluorination enzyme from Streptomyces cattleya.</title>
        <authorList>
            <person name="Schaffrath C."/>
            <person name="Deng H."/>
            <person name="O'Hagan D."/>
        </authorList>
    </citation>
    <scope>PROTEIN SEQUENCE OF 2-25</scope>
    <scope>FUNCTION</scope>
    <scope>CATALYTIC ACTIVITY</scope>
    <scope>BIOPHYSICOCHEMICAL PROPERTIES</scope>
    <scope>SUBUNIT</scope>
    <scope>MASS SPECTROMETRY</scope>
</reference>
<reference key="4">
    <citation type="submission" date="2005-10" db="PDB data bank">
        <title>Substrates and inhibitors of the fluorinase from Streptomyces cattleya.</title>
        <authorList>
            <person name="Mcewan A.R."/>
            <person name="Deng H."/>
            <person name="Mcglinchey R.P."/>
            <person name="Robinson D.R."/>
            <person name="O'Hagan D."/>
            <person name="Naismith J.H."/>
        </authorList>
    </citation>
    <scope>X-RAY CRYSTALLOGRAPHY (2.30 ANGSTROMS) IN COMPLEX WITH SUBSTRATE ANALOGS</scope>
    <scope>SUBUNIT</scope>
</reference>
<reference key="5">
    <citation type="journal article" date="2006" name="Angew. Chem. Int. Ed.">
        <title>The fluorinase from Streptomyces cattleya is also a chlorinase.</title>
        <authorList>
            <person name="Deng H."/>
            <person name="Cobb S.L."/>
            <person name="McEwan A.R."/>
            <person name="McGlinchey R.P."/>
            <person name="Naismith J.H."/>
            <person name="O'Hagan D."/>
            <person name="Robinson D.A."/>
            <person name="Spencer J.B."/>
        </authorList>
    </citation>
    <scope>X-RAY CRYSTALLOGRAPHY (2.00 ANGSTROMS) IN COMPLEX WITH SUBSTRATE ANALOGS</scope>
    <scope>FUNCTION</scope>
    <scope>SUBUNIT</scope>
</reference>
<reference key="6">
    <citation type="journal article" date="2006" name="Org. Biomol. Chem.">
        <title>Substrate specificity in enzymatic fluorination. The fluorinase from Streptomyces cattleya accepts 2'-deoxyadenosine substrates.</title>
        <authorList>
            <person name="Cobb S.L."/>
            <person name="Deng H."/>
            <person name="McEwan A.R."/>
            <person name="Naismith J.H."/>
            <person name="O'Hagan D."/>
            <person name="Robinson D.A."/>
        </authorList>
    </citation>
    <scope>X-RAY CRYSTALLOGRAPHY (2.00 ANGSTROMS)IN COMPLEX WITH SUBSTRATE ANALOGS</scope>
    <scope>FUNCTION</scope>
    <scope>SUBSTRATE SPECIFICITY</scope>
    <scope>SUBUNIT</scope>
</reference>
<reference key="7">
    <citation type="journal article" date="2007" name="J. Am. Chem. Soc.">
        <title>Mechanism of enzymatic fluorination in Streptomyces cattleya.</title>
        <authorList>
            <person name="Zhu X."/>
            <person name="Robinson D.A."/>
            <person name="McEwan A.R."/>
            <person name="O'Hagan D."/>
            <person name="Naismith J.H."/>
        </authorList>
    </citation>
    <scope>X-RAY CRYSTALLOGRAPHY (1.90 ANGSTROMS) IN COMPLEX WITH SAM AND SUBSTRATE ANALOGS</scope>
    <scope>FUNCTION</scope>
    <scope>CATALYTIC ACTIVITY</scope>
    <scope>MUTAGENESIS OF ASP-16; THR-80; PHE-156 AND SER-158</scope>
    <scope>BIOPHYSICOCHEMICAL PROPERTIES</scope>
    <scope>SUBUNIT</scope>
</reference>
<reference key="8">
    <citation type="submission" date="2014-02" db="PDB data bank">
        <title>Structure of a bacterial fluorinating enzyme with.</title>
        <authorList>
            <person name="Thomson S."/>
            <person name="Mcmahon S.A."/>
            <person name="Naismith J.H."/>
            <person name="O'Hagan D."/>
        </authorList>
    </citation>
    <scope>X-RAY CRYSTALLOGRAPHY (2.44 ANGSTROMS) IN COMPLEX WITH SUBSTRATE ANALOGS</scope>
    <scope>SUBUNIT</scope>
</reference>
<sequence length="299" mass="32370">MAANSTRRPIIAFMSDLGTTDDSVAQCKGLMYSICPDVTVVDVCHSMTPWDVEEGARYIVDLPRFFPEGTVFATTTYPATGTTTRSVAVRIKQAAKGGARGQWAGSGAGFERAEGSYIYIAPNNGLLTTVLEEHGYLEAYEVTSPKVIPEQPEPTFYSREMVAIPSAHLAAGFPLSEVGRPLEDHEIVRFNRPAVEQDGEALVGVVSAIDHPFGNVWTNIHRTDLEKAGIGYGARLRLTLDGVLPFEAPLTPTFADAGEIGNIAIYLNSRGYLSIARNAASLAYPYHLKEGMSARVEAR</sequence>
<keyword id="KW-0002">3D-structure</keyword>
<keyword id="KW-0903">Direct protein sequencing</keyword>
<keyword id="KW-0949">S-adenosyl-L-methionine</keyword>
<keyword id="KW-0808">Transferase</keyword>
<comment type="function">
    <text evidence="1 2 3 4 5 6">Involved in the biosynthesis of fluorometabolites. Catalyzes the formation of a C-F bond by combining S-adenosyl-L-methionine (SAM) and fluoride to generate 5'-fluoro-5'-deoxyadenosine (5'-FDA) and L-methionine. It can also use 2'-deoxyadenosine in place of adenosine as substrate.</text>
</comment>
<comment type="catalytic activity">
    <reaction evidence="1 2 6">
        <text>fluoride + S-adenosyl-L-methionine = 5'-deoxy-5'-fluoroadenosine + L-methionine</text>
        <dbReference type="Rhea" id="RHEA:16661"/>
        <dbReference type="ChEBI" id="CHEBI:12060"/>
        <dbReference type="ChEBI" id="CHEBI:17051"/>
        <dbReference type="ChEBI" id="CHEBI:57844"/>
        <dbReference type="ChEBI" id="CHEBI:59789"/>
        <dbReference type="EC" id="2.5.1.63"/>
    </reaction>
</comment>
<comment type="activity regulation">
    <text evidence="5">Competitively inhibited by S-adenosyl-L-homocysteine (AdoHcy) and S-adenosyl-L-homocysteine (SAH). Sinefungin is only weakly inhibitory.</text>
</comment>
<comment type="biophysicochemical properties">
    <kinetics>
        <KM evidence="6">6.5 uM for SAM (at pH 7.8 and degrees Celsius)</KM>
        <KM evidence="2">74 uM for SAM (at pH 7.9 and 37 degrees Celsius)</KM>
        <KM evidence="1">0.42 mM for SAM (at pH 7.8 and 25 degrees Celsius)</KM>
        <KM evidence="2">2 mM for fluoride (at pH 7.9 and 37 degrees Celsius)</KM>
        <KM evidence="1">8.56 mM for fluoride (at pH 7.8 and 25 degrees Celsius)</KM>
        <KM evidence="6">10.2 mM for fluoride (at pH 7.8 and degrees Celsius)</KM>
        <Vmax evidence="1">1.28 umol/min/mg enzyme toward SAM (at pH 7.8 and 25 degrees Celsius)</Vmax>
        <Vmax evidence="1">1.59 umol/min/mg enzyme toward fluoride (at pH 7.8 and 25 degrees Celsius)</Vmax>
        <text evidence="2 6">kcat is 0.07 sec(-1) for 5'-FDA synthase activity with SAM as substrate(at pH 7.9 and 37 degrees Celsius). kcat is 0.06 sec(-1) for 5'-FDA synthase activity with fluoride as substrate (at pH 7.9 and 37 degrees Celsius).</text>
    </kinetics>
    <temperatureDependence>
        <text evidence="1">Optimum temperature is 55 degrees Celsius.</text>
    </temperatureDependence>
</comment>
<comment type="subunit">
    <text evidence="1 2 3 4 6 7 8">Homohexamer; dimers of trimer.</text>
</comment>
<comment type="mass spectrometry" mass="32200.0" method="Electrospray" evidence="1"/>
<comment type="similarity">
    <text evidence="12">Belongs to the SAM hydrolase / SAM-dependent halogenase family.</text>
</comment>
<evidence type="ECO:0000269" key="1">
    <source>
    </source>
</evidence>
<evidence type="ECO:0000269" key="2">
    <source>
    </source>
</evidence>
<evidence type="ECO:0000269" key="3">
    <source>
    </source>
</evidence>
<evidence type="ECO:0000269" key="4">
    <source>
    </source>
</evidence>
<evidence type="ECO:0000269" key="5">
    <source>
    </source>
</evidence>
<evidence type="ECO:0000269" key="6">
    <source>
    </source>
</evidence>
<evidence type="ECO:0000269" key="7">
    <source ref="4"/>
</evidence>
<evidence type="ECO:0000269" key="8">
    <source ref="8"/>
</evidence>
<evidence type="ECO:0000303" key="9">
    <source>
    </source>
</evidence>
<evidence type="ECO:0000303" key="10">
    <source>
    </source>
</evidence>
<evidence type="ECO:0000303" key="11">
    <source>
    </source>
</evidence>
<evidence type="ECO:0000305" key="12"/>
<evidence type="ECO:0007829" key="13">
    <source>
        <dbReference type="PDB" id="1RQP"/>
    </source>
</evidence>
<evidence type="ECO:0007829" key="14">
    <source>
        <dbReference type="PDB" id="2C5B"/>
    </source>
</evidence>
<accession>Q70GK9</accession>
<dbReference type="EC" id="2.5.1.63" evidence="1 2 6"/>
<dbReference type="EMBL" id="AJ581748">
    <property type="protein sequence ID" value="CAE46446.1"/>
    <property type="molecule type" value="Genomic_DNA"/>
</dbReference>
<dbReference type="EMBL" id="AM055586">
    <property type="protein sequence ID" value="CAJ20006.1"/>
    <property type="molecule type" value="Genomic_DNA"/>
</dbReference>
<dbReference type="PDB" id="1RQP">
    <property type="method" value="X-ray"/>
    <property type="resolution" value="1.80 A"/>
    <property type="chains" value="A/B/C=1-299"/>
</dbReference>
<dbReference type="PDB" id="1RQR">
    <property type="method" value="X-ray"/>
    <property type="resolution" value="2.67 A"/>
    <property type="chains" value="A/B/C=1-299"/>
</dbReference>
<dbReference type="PDB" id="2C2W">
    <property type="method" value="X-ray"/>
    <property type="resolution" value="2.00 A"/>
    <property type="chains" value="A/B/C=1-299"/>
</dbReference>
<dbReference type="PDB" id="2C4T">
    <property type="method" value="X-ray"/>
    <property type="resolution" value="2.30 A"/>
    <property type="chains" value="A/B/C=1-299"/>
</dbReference>
<dbReference type="PDB" id="2C4U">
    <property type="method" value="X-ray"/>
    <property type="resolution" value="2.50 A"/>
    <property type="chains" value="A/B/C/D/E/F=1-299"/>
</dbReference>
<dbReference type="PDB" id="2C5B">
    <property type="method" value="X-ray"/>
    <property type="resolution" value="2.50 A"/>
    <property type="chains" value="A/B/C=1-299"/>
</dbReference>
<dbReference type="PDB" id="2C5H">
    <property type="method" value="X-ray"/>
    <property type="resolution" value="2.70 A"/>
    <property type="chains" value="A/B/C=1-299"/>
</dbReference>
<dbReference type="PDB" id="2CBX">
    <property type="method" value="X-ray"/>
    <property type="resolution" value="2.00 A"/>
    <property type="chains" value="A/B/C=1-299"/>
</dbReference>
<dbReference type="PDB" id="2CC2">
    <property type="method" value="X-ray"/>
    <property type="resolution" value="2.00 A"/>
    <property type="chains" value="A/B/C=1-299"/>
</dbReference>
<dbReference type="PDB" id="2V7T">
    <property type="method" value="X-ray"/>
    <property type="resolution" value="2.15 A"/>
    <property type="chains" value="A/B/C=1-299"/>
</dbReference>
<dbReference type="PDB" id="2V7U">
    <property type="method" value="X-ray"/>
    <property type="resolution" value="2.00 A"/>
    <property type="chains" value="A/B/C=1-299"/>
</dbReference>
<dbReference type="PDB" id="2V7V">
    <property type="method" value="X-ray"/>
    <property type="resolution" value="1.94 A"/>
    <property type="chains" value="A/B/C=1-299"/>
</dbReference>
<dbReference type="PDB" id="2V7W">
    <property type="method" value="X-ray"/>
    <property type="resolution" value="1.90 A"/>
    <property type="chains" value="A/B/C=1-299"/>
</dbReference>
<dbReference type="PDB" id="2V7X">
    <property type="method" value="X-ray"/>
    <property type="resolution" value="1.96 A"/>
    <property type="chains" value="A/B/C=1-299"/>
</dbReference>
<dbReference type="PDB" id="4CQJ">
    <property type="method" value="X-ray"/>
    <property type="resolution" value="2.44 A"/>
    <property type="chains" value="A/B/C=1-299"/>
</dbReference>
<dbReference type="PDB" id="5FIU">
    <property type="method" value="X-ray"/>
    <property type="resolution" value="1.84 A"/>
    <property type="chains" value="A/B/C=1-299"/>
</dbReference>
<dbReference type="PDBsum" id="1RQP"/>
<dbReference type="PDBsum" id="1RQR"/>
<dbReference type="PDBsum" id="2C2W"/>
<dbReference type="PDBsum" id="2C4T"/>
<dbReference type="PDBsum" id="2C4U"/>
<dbReference type="PDBsum" id="2C5B"/>
<dbReference type="PDBsum" id="2C5H"/>
<dbReference type="PDBsum" id="2CBX"/>
<dbReference type="PDBsum" id="2CC2"/>
<dbReference type="PDBsum" id="2V7T"/>
<dbReference type="PDBsum" id="2V7U"/>
<dbReference type="PDBsum" id="2V7V"/>
<dbReference type="PDBsum" id="2V7W"/>
<dbReference type="PDBsum" id="2V7X"/>
<dbReference type="PDBsum" id="4CQJ"/>
<dbReference type="PDBsum" id="5FIU"/>
<dbReference type="SMR" id="Q70GK9"/>
<dbReference type="DrugBank" id="DB07170">
    <property type="generic name" value="5'-FLUORO-2',5'-DIDEOXYADENOSINE"/>
</dbReference>
<dbReference type="DrugBank" id="DB03716">
    <property type="generic name" value="5'-Fluoro-5'-Deoxyadenosine"/>
</dbReference>
<dbReference type="OMA" id="DNFAQKY"/>
<dbReference type="BioCyc" id="MetaCyc:MONOMER-15922"/>
<dbReference type="BRENDA" id="2.5.1.63">
    <property type="organism ID" value="5990"/>
</dbReference>
<dbReference type="BRENDA" id="2.5.1.94">
    <property type="organism ID" value="5990"/>
</dbReference>
<dbReference type="SABIO-RK" id="Q70GK9"/>
<dbReference type="EvolutionaryTrace" id="Q70GK9"/>
<dbReference type="GO" id="GO:0033846">
    <property type="term" value="F:adenosyl-fluoride synthase activity"/>
    <property type="evidence" value="ECO:0007669"/>
    <property type="project" value="UniProtKB-EC"/>
</dbReference>
<dbReference type="Gene3D" id="2.40.30.90">
    <property type="entry name" value="Bacterial fluorinating enzyme like"/>
    <property type="match status" value="1"/>
</dbReference>
<dbReference type="Gene3D" id="3.40.50.10790">
    <property type="entry name" value="S-adenosyl-l-methionine hydroxide adenosyltransferase, N-terminal"/>
    <property type="match status" value="1"/>
</dbReference>
<dbReference type="InterPro" id="IPR030978">
    <property type="entry name" value="Fluorinase"/>
</dbReference>
<dbReference type="InterPro" id="IPR046470">
    <property type="entry name" value="SAM_HAT_C"/>
</dbReference>
<dbReference type="InterPro" id="IPR046469">
    <property type="entry name" value="SAM_HAT_N"/>
</dbReference>
<dbReference type="InterPro" id="IPR002747">
    <property type="entry name" value="SAM_OH_AdoTrfase"/>
</dbReference>
<dbReference type="InterPro" id="IPR023227">
    <property type="entry name" value="SAM_OH_AdoTrfase_C_sf"/>
</dbReference>
<dbReference type="InterPro" id="IPR023228">
    <property type="entry name" value="SAM_OH_AdoTrfase_N_sf"/>
</dbReference>
<dbReference type="NCBIfam" id="TIGR04507">
    <property type="entry name" value="fluorinase"/>
    <property type="match status" value="1"/>
</dbReference>
<dbReference type="PANTHER" id="PTHR35092">
    <property type="entry name" value="CHLORINASE MJ1651"/>
    <property type="match status" value="1"/>
</dbReference>
<dbReference type="PANTHER" id="PTHR35092:SF1">
    <property type="entry name" value="CHLORINASE MJ1651"/>
    <property type="match status" value="1"/>
</dbReference>
<dbReference type="Pfam" id="PF20257">
    <property type="entry name" value="SAM_HAT_C"/>
    <property type="match status" value="1"/>
</dbReference>
<dbReference type="Pfam" id="PF01887">
    <property type="entry name" value="SAM_HAT_N"/>
    <property type="match status" value="2"/>
</dbReference>
<dbReference type="PIRSF" id="PIRSF006779">
    <property type="entry name" value="UCP006779"/>
    <property type="match status" value="1"/>
</dbReference>
<dbReference type="SUPFAM" id="SSF101852">
    <property type="entry name" value="Bacterial fluorinating enzyme, C-terminal domain"/>
    <property type="match status" value="1"/>
</dbReference>
<dbReference type="SUPFAM" id="SSF102522">
    <property type="entry name" value="Bacterial fluorinating enzyme, N-terminal domain"/>
    <property type="match status" value="1"/>
</dbReference>
<feature type="initiator methionine" description="Removed" evidence="1">
    <location>
        <position position="1"/>
    </location>
</feature>
<feature type="chain" id="PRO_0000430663" description="Fluorinase">
    <location>
        <begin position="2"/>
        <end position="299"/>
    </location>
</feature>
<feature type="binding site" evidence="2 3 4 6 7 8">
    <location>
        <position position="16"/>
    </location>
    <ligand>
        <name>S-adenosyl-L-methionine</name>
        <dbReference type="ChEBI" id="CHEBI:59789"/>
    </ligand>
</feature>
<feature type="binding site" evidence="2 3 4 6 7 8">
    <location>
        <begin position="21"/>
        <end position="23"/>
    </location>
    <ligand>
        <name>S-adenosyl-L-methionine</name>
        <dbReference type="ChEBI" id="CHEBI:59789"/>
    </ligand>
</feature>
<feature type="binding site" evidence="2 3 4 6 7 8">
    <location>
        <position position="77"/>
    </location>
    <ligand>
        <name>S-adenosyl-L-methionine</name>
        <dbReference type="ChEBI" id="CHEBI:59789"/>
    </ligand>
</feature>
<feature type="binding site" evidence="2 3 4 6 7 8">
    <location>
        <position position="158"/>
    </location>
    <ligand>
        <name>S-adenosyl-L-methionine</name>
        <dbReference type="ChEBI" id="CHEBI:59789"/>
    </ligand>
</feature>
<feature type="binding site" evidence="2 3 4 6 7 8">
    <location>
        <position position="210"/>
    </location>
    <ligand>
        <name>S-adenosyl-L-methionine</name>
        <dbReference type="ChEBI" id="CHEBI:59789"/>
    </ligand>
</feature>
<feature type="binding site" evidence="2 3 4 6 7 8">
    <location>
        <position position="215"/>
    </location>
    <ligand>
        <name>S-adenosyl-L-methionine</name>
        <dbReference type="ChEBI" id="CHEBI:59789"/>
    </ligand>
</feature>
<feature type="binding site" evidence="2 3 4 6 7 8">
    <location>
        <begin position="269"/>
        <end position="270"/>
    </location>
    <ligand>
        <name>S-adenosyl-L-methionine</name>
        <dbReference type="ChEBI" id="CHEBI:59789"/>
    </ligand>
</feature>
<feature type="binding site" evidence="2 3 4 6 7 8">
    <location>
        <begin position="277"/>
        <end position="279"/>
    </location>
    <ligand>
        <name>S-adenosyl-L-methionine</name>
        <dbReference type="ChEBI" id="CHEBI:59789"/>
    </ligand>
</feature>
<feature type="mutagenesis site" description="Loss of 5'-FDA synthase activity." evidence="6">
    <original>D</original>
    <variation>A</variation>
    <location>
        <position position="16"/>
    </location>
</feature>
<feature type="mutagenesis site" description="Loss of 5'-FDA synthase activity." evidence="6">
    <original>D</original>
    <variation>N</variation>
    <location>
        <position position="16"/>
    </location>
</feature>
<feature type="mutagenesis site" description="Loss of 5'-FDA synthase activity." evidence="6">
    <original>D</original>
    <variation>S</variation>
    <location>
        <position position="16"/>
    </location>
</feature>
<feature type="mutagenesis site" description="Weak 5'-FDA synthase activity. 2-fold increase of the affinity binding for S-adenosyl-L-methionine and 4-fold decrease of the affinity binding for fluoride." evidence="6">
    <original>T</original>
    <variation>A</variation>
    <location>
        <position position="80"/>
    </location>
</feature>
<feature type="mutagenesis site" description="The 5'-FDA synthase activity and the affinity binding for S-adenosyl-L-methionine and fuoride are similar to the wild-type." evidence="6">
    <original>T</original>
    <variation>S</variation>
    <location>
        <position position="80"/>
    </location>
</feature>
<feature type="mutagenesis site" description="Weak 5'-FDA synthase activity." evidence="6">
    <original>F</original>
    <variation>A</variation>
    <location>
        <position position="156"/>
    </location>
</feature>
<feature type="mutagenesis site" description="Weak 5'-FDA synthase activity." evidence="6">
    <original>F</original>
    <variation>V</variation>
    <location>
        <position position="156"/>
    </location>
</feature>
<feature type="mutagenesis site" description="The 5'-FDA synthase activity is 40% of the wild-type. 2-fold increase of the affinity binding for fluoride and 1.5-fold decrease of the affinity binding for S-adenosyl-L-methionine." evidence="6">
    <original>S</original>
    <variation>A</variation>
    <location>
        <position position="158"/>
    </location>
</feature>
<feature type="mutagenesis site" description="Weak 5'-FDA synthase activity." evidence="6">
    <original>S</original>
    <variation>G</variation>
    <location>
        <position position="158"/>
    </location>
</feature>
<feature type="strand" evidence="13">
    <location>
        <begin position="10"/>
        <end position="17"/>
    </location>
</feature>
<feature type="strand" evidence="13">
    <location>
        <begin position="19"/>
        <end position="22"/>
    </location>
</feature>
<feature type="helix" evidence="13">
    <location>
        <begin position="23"/>
        <end position="34"/>
    </location>
</feature>
<feature type="strand" evidence="13">
    <location>
        <begin position="39"/>
        <end position="45"/>
    </location>
</feature>
<feature type="helix" evidence="13">
    <location>
        <begin position="52"/>
        <end position="57"/>
    </location>
</feature>
<feature type="turn" evidence="13">
    <location>
        <begin position="58"/>
        <end position="61"/>
    </location>
</feature>
<feature type="helix" evidence="13">
    <location>
        <begin position="63"/>
        <end position="65"/>
    </location>
</feature>
<feature type="strand" evidence="13">
    <location>
        <begin position="71"/>
        <end position="75"/>
    </location>
</feature>
<feature type="turn" evidence="13">
    <location>
        <begin position="78"/>
        <end position="81"/>
    </location>
</feature>
<feature type="strand" evidence="13">
    <location>
        <begin position="87"/>
        <end position="92"/>
    </location>
</feature>
<feature type="turn" evidence="13">
    <location>
        <begin position="98"/>
        <end position="101"/>
    </location>
</feature>
<feature type="strand" evidence="13">
    <location>
        <begin position="105"/>
        <end position="107"/>
    </location>
</feature>
<feature type="strand" evidence="13">
    <location>
        <begin position="118"/>
        <end position="121"/>
    </location>
</feature>
<feature type="strand" evidence="13">
    <location>
        <begin position="123"/>
        <end position="125"/>
    </location>
</feature>
<feature type="helix" evidence="13">
    <location>
        <begin position="128"/>
        <end position="134"/>
    </location>
</feature>
<feature type="strand" evidence="13">
    <location>
        <begin position="136"/>
        <end position="141"/>
    </location>
</feature>
<feature type="turn" evidence="13">
    <location>
        <begin position="145"/>
        <end position="147"/>
    </location>
</feature>
<feature type="strand" evidence="13">
    <location>
        <begin position="148"/>
        <end position="151"/>
    </location>
</feature>
<feature type="helix" evidence="13">
    <location>
        <begin position="157"/>
        <end position="160"/>
    </location>
</feature>
<feature type="helix" evidence="13">
    <location>
        <begin position="163"/>
        <end position="170"/>
    </location>
</feature>
<feature type="helix" evidence="13">
    <location>
        <begin position="175"/>
        <end position="177"/>
    </location>
</feature>
<feature type="strand" evidence="14">
    <location>
        <begin position="178"/>
        <end position="181"/>
    </location>
</feature>
<feature type="helix" evidence="13">
    <location>
        <begin position="184"/>
        <end position="186"/>
    </location>
</feature>
<feature type="strand" evidence="13">
    <location>
        <begin position="196"/>
        <end position="198"/>
    </location>
</feature>
<feature type="strand" evidence="13">
    <location>
        <begin position="201"/>
        <end position="210"/>
    </location>
</feature>
<feature type="turn" evidence="13">
    <location>
        <begin position="211"/>
        <end position="214"/>
    </location>
</feature>
<feature type="strand" evidence="13">
    <location>
        <begin position="215"/>
        <end position="221"/>
    </location>
</feature>
<feature type="helix" evidence="13">
    <location>
        <begin position="222"/>
        <end position="226"/>
    </location>
</feature>
<feature type="turn" evidence="13">
    <location>
        <begin position="227"/>
        <end position="229"/>
    </location>
</feature>
<feature type="strand" evidence="13">
    <location>
        <begin position="235"/>
        <end position="240"/>
    </location>
</feature>
<feature type="turn" evidence="13">
    <location>
        <begin position="241"/>
        <end position="243"/>
    </location>
</feature>
<feature type="strand" evidence="13">
    <location>
        <begin position="244"/>
        <end position="253"/>
    </location>
</feature>
<feature type="helix" evidence="13">
    <location>
        <begin position="254"/>
        <end position="257"/>
    </location>
</feature>
<feature type="strand" evidence="13">
    <location>
        <begin position="263"/>
        <end position="267"/>
    </location>
</feature>
<feature type="strand" evidence="13">
    <location>
        <begin position="271"/>
        <end position="277"/>
    </location>
</feature>
<feature type="helix" evidence="13">
    <location>
        <begin position="283"/>
        <end position="286"/>
    </location>
</feature>
<feature type="strand" evidence="13">
    <location>
        <begin position="293"/>
        <end position="297"/>
    </location>
</feature>